<organism>
    <name type="scientific">Homo sapiens</name>
    <name type="common">Human</name>
    <dbReference type="NCBI Taxonomy" id="9606"/>
    <lineage>
        <taxon>Eukaryota</taxon>
        <taxon>Metazoa</taxon>
        <taxon>Chordata</taxon>
        <taxon>Craniata</taxon>
        <taxon>Vertebrata</taxon>
        <taxon>Euteleostomi</taxon>
        <taxon>Mammalia</taxon>
        <taxon>Eutheria</taxon>
        <taxon>Euarchontoglires</taxon>
        <taxon>Primates</taxon>
        <taxon>Haplorrhini</taxon>
        <taxon>Catarrhini</taxon>
        <taxon>Hominidae</taxon>
        <taxon>Homo</taxon>
    </lineage>
</organism>
<protein>
    <recommendedName>
        <fullName evidence="30">Complement component C9</fullName>
    </recommendedName>
    <component>
        <recommendedName>
            <fullName>Complement component C9a</fullName>
        </recommendedName>
    </component>
    <component>
        <recommendedName>
            <fullName>Complement component C9b</fullName>
        </recommendedName>
    </component>
</protein>
<keyword id="KW-0002">3D-structure</keyword>
<keyword id="KW-0913">Age-related macular degeneration</keyword>
<keyword id="KW-0179">Complement alternate pathway</keyword>
<keyword id="KW-0180">Complement pathway</keyword>
<keyword id="KW-0204">Cytolysis</keyword>
<keyword id="KW-0903">Direct protein sequencing</keyword>
<keyword id="KW-0225">Disease variant</keyword>
<keyword id="KW-1015">Disulfide bond</keyword>
<keyword id="KW-0245">EGF-like domain</keyword>
<keyword id="KW-0325">Glycoprotein</keyword>
<keyword id="KW-0391">Immunity</keyword>
<keyword id="KW-0399">Innate immunity</keyword>
<keyword id="KW-0472">Membrane</keyword>
<keyword id="KW-0473">Membrane attack complex</keyword>
<keyword id="KW-0597">Phosphoprotein</keyword>
<keyword id="KW-1267">Proteomics identification</keyword>
<keyword id="KW-1185">Reference proteome</keyword>
<keyword id="KW-0964">Secreted</keyword>
<keyword id="KW-0732">Signal</keyword>
<keyword id="KW-1052">Target cell membrane</keyword>
<keyword id="KW-1053">Target membrane</keyword>
<keyword id="KW-0812">Transmembrane</keyword>
<keyword id="KW-1134">Transmembrane beta strand</keyword>
<accession>P02748</accession>
<feature type="signal peptide" evidence="24">
    <location>
        <begin position="1"/>
        <end position="21"/>
    </location>
</feature>
<feature type="chain" id="PRO_0000023602" description="Complement component C9">
    <location>
        <begin position="22"/>
        <end position="559"/>
    </location>
</feature>
<feature type="chain" id="PRO_0000023603" description="Complement component C9a" evidence="32">
    <location>
        <begin position="22"/>
        <end position="265"/>
    </location>
</feature>
<feature type="chain" id="PRO_0000023604" description="Complement component C9b" evidence="32">
    <location>
        <begin position="266"/>
        <end position="559"/>
    </location>
</feature>
<feature type="transmembrane region" description="Beta stranded" evidence="17 35 36">
    <location>
        <begin position="235"/>
        <end position="242"/>
    </location>
</feature>
<feature type="transmembrane region" description="Beta stranded" evidence="17 35 36">
    <location>
        <begin position="265"/>
        <end position="272"/>
    </location>
</feature>
<feature type="transmembrane region" description="Beta stranded" evidence="17 35 36">
    <location>
        <begin position="374"/>
        <end position="381"/>
    </location>
</feature>
<feature type="transmembrane region" description="Beta stranded" evidence="17 35 36">
    <location>
        <begin position="382"/>
        <end position="390"/>
    </location>
</feature>
<feature type="domain" description="TSP type-1" evidence="2">
    <location>
        <begin position="42"/>
        <end position="95"/>
    </location>
</feature>
<feature type="domain" description="LDL-receptor class A" evidence="1">
    <location>
        <begin position="99"/>
        <end position="136"/>
    </location>
</feature>
<feature type="domain" description="MACPF" evidence="3">
    <location>
        <begin position="138"/>
        <end position="509"/>
    </location>
</feature>
<feature type="domain" description="EGF-like">
    <location>
        <begin position="510"/>
        <end position="540"/>
    </location>
</feature>
<feature type="site" description="Cleavage; by thrombin" evidence="23">
    <location>
        <begin position="265"/>
        <end position="266"/>
    </location>
</feature>
<feature type="glycosylation site" description="C-linked (Man) tryptophan" evidence="5">
    <location>
        <position position="48"/>
    </location>
</feature>
<feature type="glycosylation site" description="C-linked (Man) tryptophan; partial" evidence="5">
    <location>
        <position position="51"/>
    </location>
</feature>
<feature type="glycosylation site" description="N-linked (GlcNAc...) asparagine" evidence="17">
    <location>
        <position position="277"/>
    </location>
</feature>
<feature type="glycosylation site" description="N-linked (GlcNAc...) (complex) asparagine" evidence="6 7 8 9 10 17 23">
    <location>
        <position position="415"/>
    </location>
</feature>
<feature type="disulfide bond" evidence="16 17 19 26 34 35 36 37 38">
    <location>
        <begin position="43"/>
        <end position="78"/>
    </location>
</feature>
<feature type="disulfide bond" evidence="16 17 19 34 35 36 37 38">
    <location>
        <begin position="54"/>
        <end position="88"/>
    </location>
</feature>
<feature type="disulfide bond" evidence="16 17 19 34 35 36 37 38">
    <location>
        <begin position="57"/>
        <end position="94"/>
    </location>
</feature>
<feature type="disulfide bond" evidence="16 17 19 26 34 35 36 37 38">
    <location>
        <begin position="101"/>
        <end position="112"/>
    </location>
</feature>
<feature type="disulfide bond" evidence="16 17 19 26 34 35 36 37 38">
    <location>
        <begin position="107"/>
        <end position="125"/>
    </location>
</feature>
<feature type="disulfide bond" evidence="16 17 19 26 34 35 36 37 38">
    <location>
        <begin position="119"/>
        <end position="134"/>
    </location>
</feature>
<feature type="disulfide bond" evidence="16 17 19 26 34 35 36 37 38">
    <location>
        <begin position="142"/>
        <end position="181"/>
    </location>
</feature>
<feature type="disulfide bond" evidence="17 19 35 36 37 38">
    <location>
        <begin position="380"/>
        <end position="405"/>
    </location>
</feature>
<feature type="disulfide bond" evidence="16 17 19 26 34 35 36 37 38">
    <location>
        <begin position="510"/>
        <end position="526"/>
    </location>
</feature>
<feature type="disulfide bond" evidence="16 17 19 26 34 35 36 37 38">
    <location>
        <begin position="513"/>
        <end position="528"/>
    </location>
</feature>
<feature type="disulfide bond" evidence="16 17 26 34 35 36">
    <location>
        <begin position="530"/>
        <end position="539"/>
    </location>
</feature>
<feature type="sequence variant" id="VAR_022024" description="In dbSNP:rs700233.">
    <original>R</original>
    <variation>W</variation>
    <location>
        <position position="5"/>
    </location>
</feature>
<feature type="sequence variant" id="VAR_012648" description="In C9D; dbSNP:rs121909593." evidence="28">
    <original>C</original>
    <variation>G</variation>
    <location>
        <position position="119"/>
    </location>
</feature>
<feature type="sequence variant" id="VAR_050481" description="In dbSNP:rs696763.">
    <original>D</original>
    <variation>Y</variation>
    <location>
        <position position="127"/>
    </location>
</feature>
<feature type="sequence variant" id="VAR_070940" description="In ARMD15; dbSNP:rs34882957." evidence="12">
    <original>P</original>
    <variation>S</variation>
    <location>
        <position position="167"/>
    </location>
</feature>
<feature type="sequence variant" id="VAR_027651" description="In dbSNP:rs13361416.">
    <original>I</original>
    <variation>V</variation>
    <location>
        <position position="203"/>
    </location>
</feature>
<feature type="sequence variant" id="VAR_033802" description="In dbSNP:rs34625111.">
    <original>T</original>
    <variation>S</variation>
    <location>
        <position position="279"/>
    </location>
</feature>
<feature type="sequence variant" id="VAR_061503" description="In dbSNP:rs34421659.">
    <original>S</original>
    <variation>T</variation>
    <location>
        <position position="427"/>
    </location>
</feature>
<feature type="mutagenesis site" description="Abolished inhibition by the antibody aE11." evidence="21">
    <original>RQCVPTEP</original>
    <variation>QQCEPTEE</variation>
    <location>
        <begin position="86"/>
        <end position="93"/>
    </location>
</feature>
<feature type="mutagenesis site" description="Slightly reduced inhibition by the antibody aE11." evidence="21">
    <original>R</original>
    <variation>Q</variation>
    <location>
        <position position="86"/>
    </location>
</feature>
<feature type="mutagenesis site" description="Reduced inhibition by the antibody aE11." evidence="21">
    <original>V</original>
    <variation>E</variation>
    <location>
        <position position="89"/>
    </location>
</feature>
<feature type="mutagenesis site" description="Does not affect inhibition by the antibody aE11." evidence="21">
    <original>P</original>
    <variation>E</variation>
    <location>
        <position position="93"/>
    </location>
</feature>
<feature type="mutagenesis site" description="Creates an artifactual disulfide bond that prevents the conformation change required for oligomerization and pore formation; when associated with C-427." evidence="16">
    <original>F</original>
    <variation>C</variation>
    <location>
        <position position="283"/>
    </location>
</feature>
<feature type="mutagenesis site" description="Creates an artifactual disulfide bond that prevents the conformation change required for oligomerization and pore formation; when associated with C-283." evidence="16">
    <original>V</original>
    <variation>C</variation>
    <location>
        <position position="426"/>
    </location>
</feature>
<feature type="sequence conflict" description="In Ref. 3; AAA51889." evidence="30" ref="3">
    <original>C</original>
    <variation>R</variation>
    <location>
        <position position="43"/>
    </location>
</feature>
<feature type="sequence conflict" description="In Ref. 3; AAA51889." evidence="30" ref="3">
    <location>
        <position position="314"/>
    </location>
</feature>
<feature type="sequence conflict" description="In Ref. 3; AAA51889." evidence="30" ref="3">
    <original>T</original>
    <variation>P</variation>
    <location>
        <position position="417"/>
    </location>
</feature>
<feature type="strand" evidence="42">
    <location>
        <begin position="41"/>
        <end position="45"/>
    </location>
</feature>
<feature type="turn" evidence="42">
    <location>
        <begin position="56"/>
        <end position="58"/>
    </location>
</feature>
<feature type="strand" evidence="42">
    <location>
        <begin position="60"/>
        <end position="64"/>
    </location>
</feature>
<feature type="strand" evidence="42">
    <location>
        <begin position="67"/>
        <end position="72"/>
    </location>
</feature>
<feature type="strand" evidence="42">
    <location>
        <begin position="82"/>
        <end position="87"/>
    </location>
</feature>
<feature type="strand" evidence="42">
    <location>
        <begin position="102"/>
        <end position="106"/>
    </location>
</feature>
<feature type="strand" evidence="42">
    <location>
        <begin position="108"/>
        <end position="110"/>
    </location>
</feature>
<feature type="helix" evidence="42">
    <location>
        <begin position="115"/>
        <end position="117"/>
    </location>
</feature>
<feature type="strand" evidence="42">
    <location>
        <begin position="119"/>
        <end position="122"/>
    </location>
</feature>
<feature type="helix" evidence="42">
    <location>
        <begin position="124"/>
        <end position="126"/>
    </location>
</feature>
<feature type="turn" evidence="42">
    <location>
        <begin position="131"/>
        <end position="133"/>
    </location>
</feature>
<feature type="helix" evidence="42">
    <location>
        <begin position="153"/>
        <end position="155"/>
    </location>
</feature>
<feature type="strand" evidence="42">
    <location>
        <begin position="159"/>
        <end position="161"/>
    </location>
</feature>
<feature type="turn" evidence="42">
    <location>
        <begin position="162"/>
        <end position="165"/>
    </location>
</feature>
<feature type="strand" evidence="42">
    <location>
        <begin position="166"/>
        <end position="168"/>
    </location>
</feature>
<feature type="strand" evidence="42">
    <location>
        <begin position="199"/>
        <end position="203"/>
    </location>
</feature>
<feature type="strand" evidence="42">
    <location>
        <begin position="207"/>
        <end position="225"/>
    </location>
</feature>
<feature type="strand" evidence="42">
    <location>
        <begin position="282"/>
        <end position="308"/>
    </location>
</feature>
<feature type="strand" evidence="42">
    <location>
        <begin position="310"/>
        <end position="312"/>
    </location>
</feature>
<feature type="helix" evidence="42">
    <location>
        <begin position="317"/>
        <end position="324"/>
    </location>
</feature>
<feature type="helix" evidence="42">
    <location>
        <begin position="332"/>
        <end position="342"/>
    </location>
</feature>
<feature type="strand" evidence="42">
    <location>
        <begin position="344"/>
        <end position="373"/>
    </location>
</feature>
<feature type="helix" evidence="42">
    <location>
        <begin position="375"/>
        <end position="381"/>
    </location>
</feature>
<feature type="strand" evidence="42">
    <location>
        <begin position="414"/>
        <end position="432"/>
    </location>
</feature>
<feature type="helix" evidence="42">
    <location>
        <begin position="434"/>
        <end position="443"/>
    </location>
</feature>
<feature type="helix" evidence="42">
    <location>
        <begin position="452"/>
        <end position="461"/>
    </location>
</feature>
<feature type="turn" evidence="42">
    <location>
        <begin position="462"/>
        <end position="464"/>
    </location>
</feature>
<feature type="strand" evidence="42">
    <location>
        <begin position="467"/>
        <end position="475"/>
    </location>
</feature>
<feature type="helix" evidence="42">
    <location>
        <begin position="476"/>
        <end position="479"/>
    </location>
</feature>
<feature type="helix" evidence="42">
    <location>
        <begin position="487"/>
        <end position="503"/>
    </location>
</feature>
<feature type="strand" evidence="42">
    <location>
        <begin position="520"/>
        <end position="522"/>
    </location>
</feature>
<feature type="strand" evidence="42">
    <location>
        <begin position="525"/>
        <end position="527"/>
    </location>
</feature>
<feature type="turn" evidence="42">
    <location>
        <begin position="531"/>
        <end position="533"/>
    </location>
</feature>
<gene>
    <name evidence="29 33" type="primary">C9</name>
</gene>
<comment type="function">
    <text evidence="11 13 14 15 16 17 20 23 25 27 28">Pore-forming component of the membrane attack complex (MAC), a multiprotein complex activated by the complement cascade, which inserts into a target cell membrane and forms a pore, leading to target cell membrane rupture and cell lysis (PubMed:22832194, PubMed:26841837, PubMed:26841934, PubMed:27052168, PubMed:30552328, PubMed:6177822, PubMed:9212048, PubMed:9634479). The MAC is initiated by proteolytic cleavage of C5 into complement C5b in response to the classical, alternative, lectin and GZMK complement pathways (PubMed:9212048, PubMed:9634479). The complement pathways consist in a cascade of proteins that leads to phagocytosis and breakdown of pathogens and signaling that strengthens the adaptive immune system (PubMed:9212048, PubMed:9634479). Constitutes the pore-forming subunit of the MAC complex: during MAC assembly, C9 associates with the C5b8 intermediate complex, and polymerizes to complete the pore (PubMed:26841934, PubMed:30111885, PubMed:30552328, PubMed:34752492, PubMed:4055801, PubMed:6177822).</text>
</comment>
<comment type="activity regulation">
    <text evidence="19 21 22">Membrane attack complex (MAC) assembly is inhibited by CD59, thereby protecting self-cells from damage during complement activation (PubMed:36797260). CD59 acts by preventing incorporation of the multiple copies of C9 required for complete formation of the osmolytic pore (PubMed:36797260). MAC assembly is also inhibited by clusterin (CLU) chaperones that inhibit polymerization of C9 (PubMed:34667172). Specifically inhibited by the antibody aE11, thereby inhibiting MAC assembly (PubMed:36639734).</text>
</comment>
<comment type="subunit">
    <text evidence="11 13 14 15 16 17 18 20 25">Homooligomer; about 20 C9 chains oligomerize to give rise to a huge beta-barrel that forms a 100 Angstrom diameter pore in target membranes (PubMed:26841934, PubMed:30111885, PubMed:34752492). Component of the membrane attack complex (MAC), composed of complement C5b, C6, C7, C8A, C8B, C8G and multiple copies of the pore-forming subunit C9 (PubMed:22832194, PubMed:26841837, PubMed:26841934, PubMed:27052168, PubMed:30552328, PubMed:31061395, PubMed:34752492, PubMed:6177822).</text>
</comment>
<comment type="interaction">
    <interactant intactId="EBI-6677628">
        <id>P02748</id>
    </interactant>
    <interactant intactId="EBI-1222467">
        <id>P02649</id>
        <label>APOE</label>
    </interactant>
    <organismsDiffer>false</organismsDiffer>
    <experiments>2</experiments>
</comment>
<comment type="interaction">
    <interactant intactId="EBI-6677628">
        <id>P02748</id>
    </interactant>
    <interactant intactId="EBI-990792">
        <id>P00441</id>
        <label>SOD1</label>
    </interactant>
    <organismsDiffer>false</organismsDiffer>
    <experiments>3</experiments>
</comment>
<comment type="subcellular location">
    <subcellularLocation>
        <location evidence="11 14 26 27 28">Secreted</location>
    </subcellularLocation>
    <subcellularLocation>
        <location evidence="14 16 17 18 20 27">Target cell membrane</location>
        <topology evidence="14 17">Multi-pass membrane protein</topology>
    </subcellularLocation>
    <text evidence="14 16 18 23 28">Secreted as soluble monomer (PubMed:26841934, PubMed:30111885, PubMed:4055801, PubMed:9634479). Oligomerizes at target membranes, forming a pre-pore (PubMed:26841934, PubMed:30111885, PubMed:31061395, PubMed:4055801, PubMed:9634479). A conformation change then leads to the formation of a 100 Angstrom diameter pore (PubMed:26841934, PubMed:30111885, PubMed:31061395, PubMed:4055801, PubMed:9634479).</text>
</comment>
<comment type="tissue specificity">
    <text evidence="11 14 26 27 28">Plasma (at protein level).</text>
</comment>
<comment type="PTM">
    <text evidence="23">Thrombin cleaves factor C9 to produce C9a and C9b.</text>
</comment>
<comment type="PTM">
    <text evidence="4">Phosphorylation sites are present in the extracellular medium.</text>
</comment>
<comment type="PTM">
    <text evidence="16 26 31">Initially, positions and connectivity of disulfide bonds were based on peptide sequencing done for the human protein (PubMed:8603752). The crystal structures for the human and mouse proteins corrected the positions and connectivities of the disulfide bonds (PubMed:30111885). The distance between Cys-57 and Cys-94 in the monomeric mouse protein precludes formation of a disulfide bond, contrary to what is seen in the structure of the human polymeric form of the protein (Probable).</text>
</comment>
<comment type="disease" evidence="28">
    <disease id="DI-01383">
        <name>Complement component 9 deficiency</name>
        <acronym>C9D</acronym>
        <description>A rare defect of the complement classical pathway associated with susceptibility to severe recurrent infections predominantly by Neisseria gonorrhoeae or Neisseria meningitidis. Some patients may develop dermatomyositis.</description>
        <dbReference type="MIM" id="613825"/>
    </disease>
    <text>Disease susceptibility is associated with variants affecting the gene represented in this entry.</text>
</comment>
<comment type="disease" evidence="12">
    <disease id="DI-03998">
        <name>Macular degeneration, age-related, 15</name>
        <acronym>ARMD15</acronym>
        <description>A form of age-related macular degeneration, a multifactorial eye disease and the most common cause of irreversible vision loss in the developed world. In most patients, the disease is manifest as ophthalmoscopically visible yellowish accumulations of protein and lipid that lie beneath the retinal pigment epithelium and within an elastin-containing structure known as Bruch membrane.</description>
        <dbReference type="MIM" id="615591"/>
    </disease>
    <text>Disease susceptibility is associated with variants affecting the gene represented in this entry.</text>
</comment>
<comment type="similarity">
    <text evidence="30">Belongs to the complement C6/C7/C8/C9 family.</text>
</comment>
<comment type="online information" name="C9base">
    <link uri="https://databases.lovd.nl/shared/genes/C9"/>
    <text>C9 mutation db</text>
</comment>
<name>CO9_HUMAN</name>
<proteinExistence type="evidence at protein level"/>
<sequence>MSACRSFAVAICILEISILTAQYTTSYDPELTESSGSASHIDCRMSPWSEWSQCDPCLRQMFRSRSIEVFGQFNGKRCTDAVGDRRQCVPTEPCEDAEDDCGNDFQCSTGRCIKMRLRCNGDNDCGDFSDEDDCESEPRPPCRDRVVEESELARTAGYGINILGMDPLSTPFDNEFYNGLCNRDRDGNTLTYYRRPWNVASLIYETKGEKNFRTEHYEEQIEAFKSIIQEKTSNFNAAISLKFTPTETNKAEQCCEETASSISLHGKGSFRFSYSKNETYQLFLSYSSKKEKMFLHVKGEIHLGRFVMRNRDVVLTTTFVDDIKALPTTYEKGEYFAFLETYGTHYSSSGSLGGLYELIYVLDKASMKRKGVELKDIKRCLGYHLDVSLAFSEISVGAEFNKDDCVKRGEGRAVNITSENLIDDVVSLIRGGTRKYAFELKEKLLRGTVIDVTDFVNWASSINDAPVLISQKLSPIYNLVPVKMKNAHLKKQNLERAIEDYINEFSVRKCHTCQNGGTVILMDGKCLCACPFKFEGIACEISKQKISEGLPALEFPNEK</sequence>
<dbReference type="EMBL" id="X02176">
    <property type="protein sequence ID" value="CAA26117.1"/>
    <property type="molecule type" value="mRNA"/>
</dbReference>
<dbReference type="EMBL" id="BC020721">
    <property type="protein sequence ID" value="AAH20721.1"/>
    <property type="molecule type" value="mRNA"/>
</dbReference>
<dbReference type="EMBL" id="K02766">
    <property type="protein sequence ID" value="AAA51889.1"/>
    <property type="molecule type" value="mRNA"/>
</dbReference>
<dbReference type="EMBL" id="J02833">
    <property type="protein sequence ID" value="AAA51890.1"/>
    <property type="molecule type" value="Genomic_DNA"/>
</dbReference>
<dbReference type="EMBL" id="Y08545">
    <property type="protein sequence ID" value="CAA69849.1"/>
    <property type="molecule type" value="Genomic_DNA"/>
</dbReference>
<dbReference type="EMBL" id="Y08546">
    <property type="protein sequence ID" value="CAA69849.1"/>
    <property type="status" value="JOINED"/>
    <property type="molecule type" value="Genomic_DNA"/>
</dbReference>
<dbReference type="EMBL" id="Y08547">
    <property type="protein sequence ID" value="CAA69849.1"/>
    <property type="status" value="JOINED"/>
    <property type="molecule type" value="Genomic_DNA"/>
</dbReference>
<dbReference type="EMBL" id="Y08548">
    <property type="protein sequence ID" value="CAA69849.1"/>
    <property type="status" value="JOINED"/>
    <property type="molecule type" value="Genomic_DNA"/>
</dbReference>
<dbReference type="EMBL" id="Y08549">
    <property type="protein sequence ID" value="CAA69849.1"/>
    <property type="status" value="JOINED"/>
    <property type="molecule type" value="Genomic_DNA"/>
</dbReference>
<dbReference type="EMBL" id="Y08550">
    <property type="protein sequence ID" value="CAA69849.1"/>
    <property type="status" value="JOINED"/>
    <property type="molecule type" value="Genomic_DNA"/>
</dbReference>
<dbReference type="EMBL" id="Y08551">
    <property type="protein sequence ID" value="CAA69849.1"/>
    <property type="status" value="JOINED"/>
    <property type="molecule type" value="Genomic_DNA"/>
</dbReference>
<dbReference type="EMBL" id="Y08552">
    <property type="protein sequence ID" value="CAA69849.1"/>
    <property type="status" value="JOINED"/>
    <property type="molecule type" value="Genomic_DNA"/>
</dbReference>
<dbReference type="EMBL" id="Y08553">
    <property type="protein sequence ID" value="CAA69849.1"/>
    <property type="status" value="JOINED"/>
    <property type="molecule type" value="Genomic_DNA"/>
</dbReference>
<dbReference type="EMBL" id="Y08554">
    <property type="protein sequence ID" value="CAA69849.1"/>
    <property type="status" value="JOINED"/>
    <property type="molecule type" value="Genomic_DNA"/>
</dbReference>
<dbReference type="CCDS" id="CCDS3929.1"/>
<dbReference type="PIR" id="A59363">
    <property type="entry name" value="C9HU"/>
</dbReference>
<dbReference type="RefSeq" id="NP_001728.1">
    <property type="nucleotide sequence ID" value="NM_001737.5"/>
</dbReference>
<dbReference type="PDB" id="5FMW">
    <property type="method" value="EM"/>
    <property type="resolution" value="6.70 A"/>
    <property type="chains" value="A/B/C/D/E/F/G/H/I/J/K/L/M/N/O/P/Q/R/S/T/U/V=39-544"/>
</dbReference>
<dbReference type="PDB" id="6DLW">
    <property type="method" value="EM"/>
    <property type="resolution" value="3.90 A"/>
    <property type="chains" value="A/B/C/D/E/F/G/H/I/J/K/L/M/N/O/P/Q/R/S/T/U/V=22-559"/>
</dbReference>
<dbReference type="PDB" id="6H03">
    <property type="method" value="EM"/>
    <property type="resolution" value="5.60 A"/>
    <property type="chains" value="G/H/I/J/K/L/M/N/O/P/Q/R/S/T/U/V/W/X=22-559"/>
</dbReference>
<dbReference type="PDB" id="6H04">
    <property type="method" value="EM"/>
    <property type="resolution" value="5.60 A"/>
    <property type="chains" value="G/H/I/J/K/L/M/N/O/P/Q/R/S/T/U/V/W/X=22-559"/>
</dbReference>
<dbReference type="PDB" id="7NYC">
    <property type="method" value="EM"/>
    <property type="resolution" value="3.50 A"/>
    <property type="chains" value="G/H/I=22-559"/>
</dbReference>
<dbReference type="PDB" id="7NYD">
    <property type="method" value="EM"/>
    <property type="resolution" value="3.30 A"/>
    <property type="chains" value="G/H=22-559"/>
</dbReference>
<dbReference type="PDB" id="8B0G">
    <property type="method" value="EM"/>
    <property type="resolution" value="3.30 A"/>
    <property type="chains" value="H/I/J=1-559"/>
</dbReference>
<dbReference type="PDB" id="8B0H">
    <property type="method" value="EM"/>
    <property type="resolution" value="3.30 A"/>
    <property type="chains" value="H/I=1-559"/>
</dbReference>
<dbReference type="PDB" id="8DE6">
    <property type="method" value="EM"/>
    <property type="resolution" value="3.20 A"/>
    <property type="chains" value="A/C/G=21-559"/>
</dbReference>
<dbReference type="PDBsum" id="5FMW"/>
<dbReference type="PDBsum" id="6DLW"/>
<dbReference type="PDBsum" id="6H03"/>
<dbReference type="PDBsum" id="6H04"/>
<dbReference type="PDBsum" id="7NYC"/>
<dbReference type="PDBsum" id="7NYD"/>
<dbReference type="PDBsum" id="8B0G"/>
<dbReference type="PDBsum" id="8B0H"/>
<dbReference type="PDBsum" id="8DE6"/>
<dbReference type="EMDB" id="EMD-0106"/>
<dbReference type="EMDB" id="EMD-0107"/>
<dbReference type="EMDB" id="EMD-12649"/>
<dbReference type="EMDB" id="EMD-12650"/>
<dbReference type="EMDB" id="EMD-12651"/>
<dbReference type="EMDB" id="EMD-15780"/>
<dbReference type="EMDB" id="EMD-15781"/>
<dbReference type="EMDB" id="EMD-27385"/>
<dbReference type="EMDB" id="EMD-28863"/>
<dbReference type="EMDB" id="EMD-3235"/>
<dbReference type="EMDB" id="EMD-3289"/>
<dbReference type="EMDB" id="EMD-7773"/>
<dbReference type="SMR" id="P02748"/>
<dbReference type="BioGRID" id="107196">
    <property type="interactions" value="19"/>
</dbReference>
<dbReference type="ComplexPortal" id="CPX-6159">
    <property type="entry name" value="Membrane attack complex"/>
</dbReference>
<dbReference type="DIP" id="DIP-1124N"/>
<dbReference type="ELM" id="P02748"/>
<dbReference type="FunCoup" id="P02748">
    <property type="interactions" value="294"/>
</dbReference>
<dbReference type="IntAct" id="P02748">
    <property type="interactions" value="12"/>
</dbReference>
<dbReference type="MINT" id="P02748"/>
<dbReference type="STRING" id="9606.ENSP00000263408"/>
<dbReference type="BindingDB" id="P02748"/>
<dbReference type="ChEMBL" id="CHEMBL4295693"/>
<dbReference type="DrugBank" id="DB09130">
    <property type="generic name" value="Copper"/>
</dbReference>
<dbReference type="GlyConnect" id="1150">
    <property type="glycosylation" value="8 N-Linked glycans (2 sites)"/>
</dbReference>
<dbReference type="GlyCosmos" id="P02748">
    <property type="glycosylation" value="8 sites, 12 glycans"/>
</dbReference>
<dbReference type="GlyGen" id="P02748">
    <property type="glycosylation" value="12 sites, 51 N-linked glycans (2 sites), 4 O-linked glycans (5 sites)"/>
</dbReference>
<dbReference type="iPTMnet" id="P02748"/>
<dbReference type="PhosphoSitePlus" id="P02748"/>
<dbReference type="BioMuta" id="C9"/>
<dbReference type="DMDM" id="1352108"/>
<dbReference type="CPTAC" id="non-CPTAC-1110"/>
<dbReference type="CPTAC" id="non-CPTAC-1111"/>
<dbReference type="CPTAC" id="non-CPTAC-2656"/>
<dbReference type="jPOST" id="P02748"/>
<dbReference type="MassIVE" id="P02748"/>
<dbReference type="PaxDb" id="9606-ENSP00000263408"/>
<dbReference type="PeptideAtlas" id="P02748"/>
<dbReference type="ProteomicsDB" id="51564"/>
<dbReference type="Antibodypedia" id="3685">
    <property type="antibodies" value="543 antibodies from 39 providers"/>
</dbReference>
<dbReference type="DNASU" id="735"/>
<dbReference type="Ensembl" id="ENST00000263408.5">
    <property type="protein sequence ID" value="ENSP00000263408.4"/>
    <property type="gene ID" value="ENSG00000113600.12"/>
</dbReference>
<dbReference type="GeneID" id="735"/>
<dbReference type="KEGG" id="hsa:735"/>
<dbReference type="MANE-Select" id="ENST00000263408.5">
    <property type="protein sequence ID" value="ENSP00000263408.4"/>
    <property type="RefSeq nucleotide sequence ID" value="NM_001737.5"/>
    <property type="RefSeq protein sequence ID" value="NP_001728.1"/>
</dbReference>
<dbReference type="UCSC" id="uc003jlv.5">
    <property type="organism name" value="human"/>
</dbReference>
<dbReference type="AGR" id="HGNC:1358"/>
<dbReference type="CTD" id="735"/>
<dbReference type="DisGeNET" id="735"/>
<dbReference type="GeneCards" id="C9"/>
<dbReference type="HGNC" id="HGNC:1358">
    <property type="gene designation" value="C9"/>
</dbReference>
<dbReference type="HPA" id="ENSG00000113600">
    <property type="expression patterns" value="Tissue enriched (liver)"/>
</dbReference>
<dbReference type="MalaCards" id="C9"/>
<dbReference type="MIM" id="120940">
    <property type="type" value="gene"/>
</dbReference>
<dbReference type="MIM" id="613825">
    <property type="type" value="phenotype"/>
</dbReference>
<dbReference type="MIM" id="615591">
    <property type="type" value="phenotype"/>
</dbReference>
<dbReference type="neXtProt" id="NX_P02748"/>
<dbReference type="OpenTargets" id="ENSG00000113600"/>
<dbReference type="Orphanet" id="169150">
    <property type="disease" value="Immunodeficiency due to a late component of complement deficiency"/>
</dbReference>
<dbReference type="PharmGKB" id="PA25968"/>
<dbReference type="VEuPathDB" id="HostDB:ENSG00000113600"/>
<dbReference type="eggNOG" id="ENOG502QWHM">
    <property type="taxonomic scope" value="Eukaryota"/>
</dbReference>
<dbReference type="GeneTree" id="ENSGT00940000159777"/>
<dbReference type="HOGENOM" id="CLU_032453_2_0_1"/>
<dbReference type="InParanoid" id="P02748"/>
<dbReference type="OMA" id="FSVRKCH"/>
<dbReference type="OrthoDB" id="10037824at2759"/>
<dbReference type="PAN-GO" id="P02748">
    <property type="GO annotations" value="3 GO annotations based on evolutionary models"/>
</dbReference>
<dbReference type="PhylomeDB" id="P02748"/>
<dbReference type="TreeFam" id="TF330498"/>
<dbReference type="PathwayCommons" id="P02748"/>
<dbReference type="Reactome" id="R-HSA-166665">
    <property type="pathway name" value="Terminal pathway of complement"/>
</dbReference>
<dbReference type="Reactome" id="R-HSA-977606">
    <property type="pathway name" value="Regulation of Complement cascade"/>
</dbReference>
<dbReference type="SignaLink" id="P02748"/>
<dbReference type="SIGNOR" id="P02748"/>
<dbReference type="BioGRID-ORCS" id="735">
    <property type="hits" value="9 hits in 1140 CRISPR screens"/>
</dbReference>
<dbReference type="ChiTaRS" id="C9">
    <property type="organism name" value="human"/>
</dbReference>
<dbReference type="GenomeRNAi" id="735"/>
<dbReference type="Pharos" id="P02748">
    <property type="development level" value="Tchem"/>
</dbReference>
<dbReference type="PRO" id="PR:P02748"/>
<dbReference type="Proteomes" id="UP000005640">
    <property type="component" value="Chromosome 5"/>
</dbReference>
<dbReference type="RNAct" id="P02748">
    <property type="molecule type" value="protein"/>
</dbReference>
<dbReference type="Bgee" id="ENSG00000113600">
    <property type="expression patterns" value="Expressed in right lobe of liver and 94 other cell types or tissues"/>
</dbReference>
<dbReference type="GO" id="GO:0072562">
    <property type="term" value="C:blood microparticle"/>
    <property type="evidence" value="ECO:0007005"/>
    <property type="project" value="UniProtKB"/>
</dbReference>
<dbReference type="GO" id="GO:0070062">
    <property type="term" value="C:extracellular exosome"/>
    <property type="evidence" value="ECO:0007005"/>
    <property type="project" value="UniProtKB"/>
</dbReference>
<dbReference type="GO" id="GO:0005576">
    <property type="term" value="C:extracellular region"/>
    <property type="evidence" value="ECO:0000304"/>
    <property type="project" value="Reactome"/>
</dbReference>
<dbReference type="GO" id="GO:0005615">
    <property type="term" value="C:extracellular space"/>
    <property type="evidence" value="ECO:0000314"/>
    <property type="project" value="UniProtKB"/>
</dbReference>
<dbReference type="GO" id="GO:0005579">
    <property type="term" value="C:membrane attack complex"/>
    <property type="evidence" value="ECO:0000314"/>
    <property type="project" value="UniProtKB"/>
</dbReference>
<dbReference type="GO" id="GO:0044218">
    <property type="term" value="C:other organism cell membrane"/>
    <property type="evidence" value="ECO:0007669"/>
    <property type="project" value="UniProtKB-KW"/>
</dbReference>
<dbReference type="GO" id="GO:0005886">
    <property type="term" value="C:plasma membrane"/>
    <property type="evidence" value="ECO:0000314"/>
    <property type="project" value="UniProtKB"/>
</dbReference>
<dbReference type="GO" id="GO:0001906">
    <property type="term" value="P:cell killing"/>
    <property type="evidence" value="ECO:0000314"/>
    <property type="project" value="UniProtKB"/>
</dbReference>
<dbReference type="GO" id="GO:0006956">
    <property type="term" value="P:complement activation"/>
    <property type="evidence" value="ECO:0000318"/>
    <property type="project" value="GO_Central"/>
</dbReference>
<dbReference type="GO" id="GO:0006957">
    <property type="term" value="P:complement activation, alternative pathway"/>
    <property type="evidence" value="ECO:0007669"/>
    <property type="project" value="UniProtKB-KW"/>
</dbReference>
<dbReference type="GO" id="GO:0006958">
    <property type="term" value="P:complement activation, classical pathway"/>
    <property type="evidence" value="ECO:0007669"/>
    <property type="project" value="UniProtKB-KW"/>
</dbReference>
<dbReference type="GO" id="GO:0031640">
    <property type="term" value="P:killing of cells of another organism"/>
    <property type="evidence" value="ECO:0007669"/>
    <property type="project" value="UniProtKB-KW"/>
</dbReference>
<dbReference type="GO" id="GO:0050778">
    <property type="term" value="P:positive regulation of immune response"/>
    <property type="evidence" value="ECO:0000303"/>
    <property type="project" value="ComplexPortal"/>
</dbReference>
<dbReference type="GO" id="GO:0051260">
    <property type="term" value="P:protein homooligomerization"/>
    <property type="evidence" value="ECO:0000314"/>
    <property type="project" value="UniProtKB"/>
</dbReference>
<dbReference type="CDD" id="cd00112">
    <property type="entry name" value="LDLa"/>
    <property type="match status" value="1"/>
</dbReference>
<dbReference type="FunFam" id="2.10.25.10:FF:000766">
    <property type="entry name" value="Complement component C9"/>
    <property type="match status" value="1"/>
</dbReference>
<dbReference type="FunFam" id="2.20.100.10:FF:000089">
    <property type="entry name" value="Complement component C9"/>
    <property type="match status" value="1"/>
</dbReference>
<dbReference type="FunFam" id="4.10.400.10:FF:000213">
    <property type="entry name" value="Complement component C9"/>
    <property type="match status" value="1"/>
</dbReference>
<dbReference type="Gene3D" id="2.10.25.10">
    <property type="entry name" value="Laminin"/>
    <property type="match status" value="1"/>
</dbReference>
<dbReference type="Gene3D" id="4.10.400.10">
    <property type="entry name" value="Low-density Lipoprotein Receptor"/>
    <property type="match status" value="1"/>
</dbReference>
<dbReference type="Gene3D" id="2.20.100.10">
    <property type="entry name" value="Thrombospondin type-1 (TSP1) repeat"/>
    <property type="match status" value="1"/>
</dbReference>
<dbReference type="InterPro" id="IPR009030">
    <property type="entry name" value="Growth_fac_rcpt_cys_sf"/>
</dbReference>
<dbReference type="InterPro" id="IPR036055">
    <property type="entry name" value="LDL_receptor-like_sf"/>
</dbReference>
<dbReference type="InterPro" id="IPR023415">
    <property type="entry name" value="LDLR_class-A_CS"/>
</dbReference>
<dbReference type="InterPro" id="IPR002172">
    <property type="entry name" value="LDrepeatLR_classA_rpt"/>
</dbReference>
<dbReference type="InterPro" id="IPR001862">
    <property type="entry name" value="MAC_perforin"/>
</dbReference>
<dbReference type="InterPro" id="IPR020864">
    <property type="entry name" value="MACPF"/>
</dbReference>
<dbReference type="InterPro" id="IPR020863">
    <property type="entry name" value="MACPF_CS"/>
</dbReference>
<dbReference type="InterPro" id="IPR000884">
    <property type="entry name" value="TSP1_rpt"/>
</dbReference>
<dbReference type="InterPro" id="IPR036383">
    <property type="entry name" value="TSP1_rpt_sf"/>
</dbReference>
<dbReference type="PANTHER" id="PTHR45742">
    <property type="entry name" value="COMPLEMENT COMPONENT C6"/>
    <property type="match status" value="1"/>
</dbReference>
<dbReference type="PANTHER" id="PTHR45742:SF3">
    <property type="entry name" value="COMPLEMENT COMPONENT C9"/>
    <property type="match status" value="1"/>
</dbReference>
<dbReference type="Pfam" id="PF00057">
    <property type="entry name" value="Ldl_recept_a"/>
    <property type="match status" value="1"/>
</dbReference>
<dbReference type="Pfam" id="PF01823">
    <property type="entry name" value="MACPF"/>
    <property type="match status" value="1"/>
</dbReference>
<dbReference type="Pfam" id="PF00090">
    <property type="entry name" value="TSP_1"/>
    <property type="match status" value="1"/>
</dbReference>
<dbReference type="PRINTS" id="PR00764">
    <property type="entry name" value="COMPLEMENTC9"/>
</dbReference>
<dbReference type="SMART" id="SM00192">
    <property type="entry name" value="LDLa"/>
    <property type="match status" value="1"/>
</dbReference>
<dbReference type="SMART" id="SM00457">
    <property type="entry name" value="MACPF"/>
    <property type="match status" value="1"/>
</dbReference>
<dbReference type="SMART" id="SM00209">
    <property type="entry name" value="TSP1"/>
    <property type="match status" value="1"/>
</dbReference>
<dbReference type="SUPFAM" id="SSF57184">
    <property type="entry name" value="Growth factor receptor domain"/>
    <property type="match status" value="1"/>
</dbReference>
<dbReference type="SUPFAM" id="SSF57424">
    <property type="entry name" value="LDL receptor-like module"/>
    <property type="match status" value="1"/>
</dbReference>
<dbReference type="SUPFAM" id="SSF82895">
    <property type="entry name" value="TSP-1 type 1 repeat"/>
    <property type="match status" value="1"/>
</dbReference>
<dbReference type="PROSITE" id="PS00022">
    <property type="entry name" value="EGF_1"/>
    <property type="match status" value="1"/>
</dbReference>
<dbReference type="PROSITE" id="PS01186">
    <property type="entry name" value="EGF_2"/>
    <property type="match status" value="1"/>
</dbReference>
<dbReference type="PROSITE" id="PS01209">
    <property type="entry name" value="LDLRA_1"/>
    <property type="match status" value="1"/>
</dbReference>
<dbReference type="PROSITE" id="PS50068">
    <property type="entry name" value="LDLRA_2"/>
    <property type="match status" value="1"/>
</dbReference>
<dbReference type="PROSITE" id="PS00279">
    <property type="entry name" value="MACPF_1"/>
    <property type="match status" value="1"/>
</dbReference>
<dbReference type="PROSITE" id="PS51412">
    <property type="entry name" value="MACPF_2"/>
    <property type="match status" value="1"/>
</dbReference>
<dbReference type="PROSITE" id="PS50092">
    <property type="entry name" value="TSP1"/>
    <property type="match status" value="1"/>
</dbReference>
<evidence type="ECO:0000255" key="1">
    <source>
        <dbReference type="PROSITE-ProRule" id="PRU00124"/>
    </source>
</evidence>
<evidence type="ECO:0000255" key="2">
    <source>
        <dbReference type="PROSITE-ProRule" id="PRU00210"/>
    </source>
</evidence>
<evidence type="ECO:0000255" key="3">
    <source>
        <dbReference type="PROSITE-ProRule" id="PRU00745"/>
    </source>
</evidence>
<evidence type="ECO:0000269" key="4">
    <source>
    </source>
</evidence>
<evidence type="ECO:0000269" key="5">
    <source>
    </source>
</evidence>
<evidence type="ECO:0000269" key="6">
    <source>
    </source>
</evidence>
<evidence type="ECO:0000269" key="7">
    <source>
    </source>
</evidence>
<evidence type="ECO:0000269" key="8">
    <source>
    </source>
</evidence>
<evidence type="ECO:0000269" key="9">
    <source>
    </source>
</evidence>
<evidence type="ECO:0000269" key="10">
    <source>
    </source>
</evidence>
<evidence type="ECO:0000269" key="11">
    <source>
    </source>
</evidence>
<evidence type="ECO:0000269" key="12">
    <source>
    </source>
</evidence>
<evidence type="ECO:0000269" key="13">
    <source>
    </source>
</evidence>
<evidence type="ECO:0000269" key="14">
    <source>
    </source>
</evidence>
<evidence type="ECO:0000269" key="15">
    <source>
    </source>
</evidence>
<evidence type="ECO:0000269" key="16">
    <source>
    </source>
</evidence>
<evidence type="ECO:0000269" key="17">
    <source>
    </source>
</evidence>
<evidence type="ECO:0000269" key="18">
    <source>
    </source>
</evidence>
<evidence type="ECO:0000269" key="19">
    <source>
    </source>
</evidence>
<evidence type="ECO:0000269" key="20">
    <source>
    </source>
</evidence>
<evidence type="ECO:0000269" key="21">
    <source>
    </source>
</evidence>
<evidence type="ECO:0000269" key="22">
    <source>
    </source>
</evidence>
<evidence type="ECO:0000269" key="23">
    <source>
    </source>
</evidence>
<evidence type="ECO:0000269" key="24">
    <source>
    </source>
</evidence>
<evidence type="ECO:0000269" key="25">
    <source>
    </source>
</evidence>
<evidence type="ECO:0000269" key="26">
    <source>
    </source>
</evidence>
<evidence type="ECO:0000269" key="27">
    <source>
    </source>
</evidence>
<evidence type="ECO:0000269" key="28">
    <source>
    </source>
</evidence>
<evidence type="ECO:0000303" key="29">
    <source>
    </source>
</evidence>
<evidence type="ECO:0000305" key="30"/>
<evidence type="ECO:0000305" key="31">
    <source>
    </source>
</evidence>
<evidence type="ECO:0000305" key="32">
    <source>
    </source>
</evidence>
<evidence type="ECO:0000312" key="33">
    <source>
        <dbReference type="HGNC" id="HGNC:1358"/>
    </source>
</evidence>
<evidence type="ECO:0007744" key="34">
    <source>
        <dbReference type="PDB" id="6DLW"/>
    </source>
</evidence>
<evidence type="ECO:0007744" key="35">
    <source>
        <dbReference type="PDB" id="6H03"/>
    </source>
</evidence>
<evidence type="ECO:0007744" key="36">
    <source>
        <dbReference type="PDB" id="6H04"/>
    </source>
</evidence>
<evidence type="ECO:0007744" key="37">
    <source>
        <dbReference type="PDB" id="7NYC"/>
    </source>
</evidence>
<evidence type="ECO:0007744" key="38">
    <source>
        <dbReference type="PDB" id="7NYD"/>
    </source>
</evidence>
<evidence type="ECO:0007744" key="39">
    <source>
        <dbReference type="PDB" id="8B0G"/>
    </source>
</evidence>
<evidence type="ECO:0007744" key="40">
    <source>
        <dbReference type="PDB" id="8B0H"/>
    </source>
</evidence>
<evidence type="ECO:0007744" key="41">
    <source>
        <dbReference type="PDB" id="8DE6"/>
    </source>
</evidence>
<evidence type="ECO:0007829" key="42">
    <source>
        <dbReference type="PDB" id="7NYD"/>
    </source>
</evidence>
<reference key="1">
    <citation type="journal article" date="1985" name="EMBO J.">
        <title>The sequence and topology of human complement component C9.</title>
        <authorList>
            <person name="Stanley K.K."/>
            <person name="Kocher H.-P."/>
            <person name="Luzio J.P."/>
            <person name="Jackson P."/>
            <person name="Tschopp J."/>
        </authorList>
    </citation>
    <scope>NUCLEOTIDE SEQUENCE [MRNA]</scope>
</reference>
<reference key="2">
    <citation type="journal article" date="2004" name="Genome Res.">
        <title>The status, quality, and expansion of the NIH full-length cDNA project: the Mammalian Gene Collection (MGC).</title>
        <authorList>
            <consortium name="The MGC Project Team"/>
        </authorList>
    </citation>
    <scope>NUCLEOTIDE SEQUENCE [LARGE SCALE MRNA]</scope>
    <source>
        <tissue>Liver</tissue>
    </source>
</reference>
<reference key="3">
    <citation type="journal article" date="1984" name="Proc. Natl. Acad. Sci. U.S.A.">
        <title>Nucleotide sequence of cDNA and derived amino acid sequence of human complement component C9.</title>
        <authorList>
            <person name="Discipio R.G."/>
            <person name="Gehring M.R."/>
            <person name="Podack E.R."/>
            <person name="Kan C.C."/>
            <person name="Hugli T.E."/>
            <person name="Fey G.H."/>
        </authorList>
    </citation>
    <scope>NUCLEOTIDE SEQUENCE [MRNA] OF 2-559</scope>
    <scope>PROTEIN SEQUENCE OF N-TERMINUS</scope>
</reference>
<reference key="4">
    <citation type="journal article" date="1988" name="Biochemistry">
        <title>Relationships between the gene and protein structure in human complement component C9.</title>
        <authorList>
            <person name="Marazziti D."/>
            <person name="Eggertsen G."/>
            <person name="Fey G.H."/>
            <person name="Stanley K.K."/>
        </authorList>
    </citation>
    <scope>NUCLEOTIDE SEQUENCE [GENOMIC DNA] OF 62-159</scope>
</reference>
<reference key="5">
    <citation type="journal article" date="1998" name="Immunogenetics">
        <title>Heterogeneity in the genetic basis of human complement C9 deficiency.</title>
        <authorList>
            <person name="Witzel-Schloemp K."/>
            <person name="Hobart M.J."/>
            <person name="Fernie B.A."/>
            <person name="Orren A."/>
            <person name="Wuerzner R."/>
            <person name="Rittner C."/>
            <person name="Kaufmann T."/>
            <person name="Schneider P.M."/>
        </authorList>
    </citation>
    <scope>NUCLEOTIDE SEQUENCE [GENOMIC DNA] OF 27-559</scope>
    <scope>VARIANT C9D GLY-119</scope>
    <scope>FUNCTION</scope>
    <scope>SUBCELLULAR LOCATION</scope>
    <scope>TISSUE SPECIFICITY</scope>
</reference>
<reference key="6">
    <citation type="journal article" date="1985" name="J. Biol. Chem.">
        <title>The architecture of complement component C9 and poly(C9).</title>
        <authorList>
            <person name="DiScipio R.G."/>
            <person name="Hugli T.E."/>
        </authorList>
    </citation>
    <scope>PARTIAL PROTEIN SEQUENCE</scope>
    <scope>ELECTRON MICROSCOPY</scope>
    <scope>FUNCTION</scope>
    <scope>SUBCELLULAR LOCATION</scope>
    <scope>PROTEOLYTIC CLEAVAGE</scope>
    <scope>GLYCOSYLATION AT ASN-277 AND ASN-415</scope>
</reference>
<reference key="7">
    <citation type="journal article" date="1982" name="J. Exp. Med.">
        <title>Molecular organization of C9 within the membrane attack complex of complement. Induction of circular C9 polymerization by the C5b-8 assembly.</title>
        <authorList>
            <person name="Podack E.R."/>
            <person name="Tschoop J."/>
            <person name="Mueller-Eberhard H.J."/>
        </authorList>
    </citation>
    <scope>FUNCTION</scope>
    <scope>SUBUNIT</scope>
</reference>
<reference key="8">
    <citation type="journal article" date="1996" name="FEBS Lett.">
        <title>Identification of disulfide bonds in the ninth component (C9) of human complement.</title>
        <authorList>
            <person name="Lengweiler S."/>
            <person name="Schaller J."/>
            <person name="Rickli E.E."/>
        </authorList>
    </citation>
    <scope>DISULFIDE BONDS</scope>
    <scope>SUBCELLULAR LOCATION</scope>
    <scope>TISSUE SPECIFICITY</scope>
</reference>
<reference key="9">
    <citation type="journal article" date="1997" name="Pediatr. Res.">
        <title>The administration of complement component C9 enhances the survival of neonatal rats with Escherichia coli sepsis.</title>
        <authorList>
            <person name="Lassiter H.A."/>
            <person name="Walz B.M."/>
            <person name="Wilson J.L."/>
            <person name="Jung E."/>
            <person name="Calisi C.R."/>
            <person name="Goldsmith L.J."/>
            <person name="Wilson R.A."/>
            <person name="Morgan B.P."/>
            <person name="Feldhoff R.C."/>
        </authorList>
    </citation>
    <scope>FUNCTION</scope>
    <scope>SUBCELLULAR LOCATION</scope>
    <scope>TISSUE SPECIFICITY</scope>
</reference>
<reference key="10">
    <citation type="journal article" date="1999" name="Immunopharmacology">
        <title>Phosphorylation of the complement component, C9, by an ecto-protein kinase of human leukemic cells.</title>
        <authorList>
            <person name="Paas Y."/>
            <person name="Bohana-Kashtan O."/>
            <person name="Fishelson Z."/>
        </authorList>
    </citation>
    <scope>PHOSPHORYLATION</scope>
</reference>
<reference key="11">
    <citation type="journal article" date="1999" name="J. Biol. Chem.">
        <title>The four terminal components of the complement system are C-mannosylated on multiple tryptophan residues.</title>
        <authorList>
            <person name="Hofsteenge J."/>
            <person name="Blommers M."/>
            <person name="Hess D."/>
            <person name="Furmanek A."/>
            <person name="Miroshnichenko O."/>
        </authorList>
    </citation>
    <scope>GLYCOSYLATION AT TRP-48 AND TRP-51</scope>
</reference>
<reference key="12">
    <citation type="journal article" date="2004" name="Proteomics">
        <title>Screening for N-glycosylated proteins by liquid chromatography mass spectrometry.</title>
        <authorList>
            <person name="Bunkenborg J."/>
            <person name="Pilch B.J."/>
            <person name="Podtelejnikov A.V."/>
            <person name="Wisniewski J.R."/>
        </authorList>
    </citation>
    <scope>GLYCOSYLATION [LARGE SCALE ANALYSIS] AT ASN-415</scope>
    <source>
        <tissue>Plasma</tissue>
    </source>
</reference>
<reference key="13">
    <citation type="journal article" date="2005" name="J. Proteome Res.">
        <title>Human plasma N-glycoproteome analysis by immunoaffinity subtraction, hydrazide chemistry, and mass spectrometry.</title>
        <authorList>
            <person name="Liu T."/>
            <person name="Qian W.-J."/>
            <person name="Gritsenko M.A."/>
            <person name="Camp D.G. II"/>
            <person name="Monroe M.E."/>
            <person name="Moore R.J."/>
            <person name="Smith R.D."/>
        </authorList>
    </citation>
    <scope>GLYCOSYLATION [LARGE SCALE ANALYSIS] AT ASN-277 AND ASN-415</scope>
    <source>
        <tissue>Plasma</tissue>
    </source>
</reference>
<reference key="14">
    <citation type="journal article" date="2006" name="Mol. Cell. Proteomics">
        <title>Elucidation of N-glycosylation sites on human platelet proteins: a glycoproteomic approach.</title>
        <authorList>
            <person name="Lewandrowski U."/>
            <person name="Moebius J."/>
            <person name="Walter U."/>
            <person name="Sickmann A."/>
        </authorList>
    </citation>
    <scope>GLYCOSYLATION [LARGE SCALE ANALYSIS] AT ASN-415</scope>
    <source>
        <tissue>Platelet</tissue>
    </source>
</reference>
<reference key="15">
    <citation type="journal article" date="2009" name="J. Proteome Res.">
        <title>Glycoproteomics analysis of human liver tissue by combination of multiple enzyme digestion and hydrazide chemistry.</title>
        <authorList>
            <person name="Chen R."/>
            <person name="Jiang X."/>
            <person name="Sun D."/>
            <person name="Han G."/>
            <person name="Wang F."/>
            <person name="Ye M."/>
            <person name="Wang L."/>
            <person name="Zou H."/>
        </authorList>
    </citation>
    <scope>GLYCOSYLATION [LARGE SCALE ANALYSIS] AT ASN-277 AND ASN-415</scope>
    <source>
        <tissue>Liver</tissue>
    </source>
</reference>
<reference key="16">
    <citation type="journal article" date="2009" name="Mol. Cell. Proteomics">
        <title>A strategy for precise and large scale identification of core fucosylated glycoproteins.</title>
        <authorList>
            <person name="Jia W."/>
            <person name="Lu Z."/>
            <person name="Fu Y."/>
            <person name="Wang H.P."/>
            <person name="Wang L.H."/>
            <person name="Chi H."/>
            <person name="Yuan Z.F."/>
            <person name="Zheng Z.B."/>
            <person name="Song L.N."/>
            <person name="Han H.H."/>
            <person name="Liang Y.M."/>
            <person name="Wang J.L."/>
            <person name="Cai Y."/>
            <person name="Zhang Y.K."/>
            <person name="Deng Y.L."/>
            <person name="Ying W.T."/>
            <person name="He S.M."/>
            <person name="Qian X.H."/>
        </authorList>
    </citation>
    <scope>GLYCOSYLATION AT ASN-415</scope>
</reference>
<reference key="17">
    <citation type="journal article" date="2014" name="J. Proteomics">
        <title>An enzyme assisted RP-RPLC approach for in-depth analysis of human liver phosphoproteome.</title>
        <authorList>
            <person name="Bian Y."/>
            <person name="Song C."/>
            <person name="Cheng K."/>
            <person name="Dong M."/>
            <person name="Wang F."/>
            <person name="Huang J."/>
            <person name="Sun D."/>
            <person name="Wang L."/>
            <person name="Ye M."/>
            <person name="Zou H."/>
        </authorList>
    </citation>
    <scope>IDENTIFICATION BY MASS SPECTROMETRY [LARGE SCALE ANALYSIS]</scope>
    <source>
        <tissue>Liver</tissue>
    </source>
</reference>
<reference key="18">
    <citation type="journal article" date="2016" name="Cell Rep.">
        <title>Heterogeneous MAC initiator and pore structures in a lipid bilayer by phase-plate cryo-electron tomography.</title>
        <authorList>
            <person name="Sharp T.H."/>
            <person name="Koster A.J."/>
            <person name="Gros P."/>
        </authorList>
    </citation>
    <scope>FUNCTION</scope>
    <scope>SUBUNIT</scope>
</reference>
<reference key="19">
    <citation type="journal article" date="2016" name="Nat. Commun.">
        <title>Structural basis of complement membrane attack complex formation.</title>
        <authorList>
            <person name="Serna M."/>
            <person name="Giles J.L."/>
            <person name="Morgan B.P."/>
            <person name="Bubeck D."/>
        </authorList>
    </citation>
    <scope>FUNCTION</scope>
    <scope>SUBUNIT</scope>
</reference>
<reference key="20">
    <citation type="journal article" date="2019" name="Nat. Commun.">
        <title>Single-molecule kinetics of pore assembly by the membrane attack complex.</title>
        <authorList>
            <person name="Parsons E.S."/>
            <person name="Stanley G.J."/>
            <person name="Pyne A.L.B."/>
            <person name="Hodel A.W."/>
            <person name="Nievergelt A.P."/>
            <person name="Menny A."/>
            <person name="Yon A.R."/>
            <person name="Rowley A."/>
            <person name="Richter R.P."/>
            <person name="Fantner G.E."/>
            <person name="Bubeck D."/>
            <person name="Hoogenboom B.W."/>
        </authorList>
    </citation>
    <scope>FUNCTION</scope>
    <scope>SUBUNIT</scope>
</reference>
<reference key="21">
    <citation type="journal article" date="2021" name="PLoS Pathog.">
        <title>Polymerization of C9 enhances bacterial cell envelope damage and killing by membrane attack complex pores.</title>
        <authorList>
            <person name="Doorduijn D.J."/>
            <person name="Heesterbeek D.A.C."/>
            <person name="Ruyken M."/>
            <person name="de Haas C.J.C."/>
            <person name="Stapels D.A.C."/>
            <person name="Aerts P.C."/>
            <person name="Rooijakkers S.H.M."/>
            <person name="Bardoel B.W."/>
        </authorList>
    </citation>
    <scope>FUNCTION</scope>
    <scope>SUBUNIT</scope>
    <scope>SUBCELLULAR LOCATION</scope>
</reference>
<reference key="22">
    <citation type="journal article" date="1990" name="Mol. Immunol.">
        <title>Localization and molecular modelling of the membrane-inserted domain of the ninth component of human complement and perforin.</title>
        <authorList>
            <person name="Peitsch M.C."/>
            <person name="Amiguet P."/>
            <person name="Guy R."/>
            <person name="Brunner J."/>
            <person name="Maizel J.V. Jr."/>
            <person name="Tschopp J."/>
        </authorList>
    </citation>
    <scope>3D-STRUCTURE MODELING OF MEMBRANE-SPANNING DOMAIN (MSB)</scope>
</reference>
<reference key="23">
    <citation type="journal article" date="2012" name="Cell Rep.">
        <title>Assembly and regulation of the membrane attack complex based on structures of C5b6 and sC5b9.</title>
        <authorList>
            <person name="Hadders M.A."/>
            <person name="Bubeck D."/>
            <person name="Roversi P."/>
            <person name="Hakobyan S."/>
            <person name="Forneris F."/>
            <person name="Morgan B.P."/>
            <person name="Pangburn M.K."/>
            <person name="Llorca O."/>
            <person name="Lea S.M."/>
            <person name="Gros P."/>
        </authorList>
    </citation>
    <scope>ELECTRON MICROSCOPY</scope>
    <scope>FUNCTION</scope>
    <scope>SUBUNIT</scope>
    <scope>SUBCELLULAR LOCATION</scope>
    <scope>TISSUE SPECIFICITY</scope>
</reference>
<reference key="24">
    <citation type="journal article" date="2016" name="Nat. Commun.">
        <title>Structure of the poly-C9 component of the complement membrane attack complex.</title>
        <authorList>
            <person name="Dudkina N.V."/>
            <person name="Spicer B.A."/>
            <person name="Reboul C.F."/>
            <person name="Conroy P.J."/>
            <person name="Lukoyanova N."/>
            <person name="Elmlund H."/>
            <person name="Law R.H."/>
            <person name="Ekkel S.M."/>
            <person name="Kondos S.C."/>
            <person name="Goode R.J."/>
            <person name="Ramm G."/>
            <person name="Whisstock J.C."/>
            <person name="Saibil H.R."/>
            <person name="Dunstone M.A."/>
        </authorList>
    </citation>
    <scope>STRUCTURE BY ELECTRON MICROSCOPY (6.70 ANGSTROMS) OF 39-544</scope>
    <scope>FUNCTION</scope>
    <scope>SUBUNIT</scope>
    <scope>SUBCELLULAR LOCATION</scope>
</reference>
<reference evidence="34" key="25">
    <citation type="journal article" date="2018" name="Nat. Commun.">
        <title>The first transmembrane region of complement component-9 acts as a brake on its self-assembly.</title>
        <authorList>
            <person name="Spicer B.A."/>
            <person name="Law R.H.P."/>
            <person name="Caradoc-Davies T.T."/>
            <person name="Ekkel S.M."/>
            <person name="Bayly-Jones C."/>
            <person name="Pang S.S."/>
            <person name="Conroy P.J."/>
            <person name="Ramm G."/>
            <person name="Radjainia M."/>
            <person name="Venugopal H."/>
            <person name="Whisstock J.C."/>
            <person name="Dunstone M.A."/>
        </authorList>
    </citation>
    <scope>STRUCTURE BY ELECTRON MICROSCOPY (3.90 ANGSTROMS) OF 22-559</scope>
    <scope>FUNCTION</scope>
    <scope>SUBCELLULAR LOCATION</scope>
    <scope>SUBUNIT</scope>
    <scope>DISULFIDE BONDS</scope>
    <scope>MUTAGENESIS OF PHE-283 AND VAL-426</scope>
</reference>
<reference evidence="35 36" key="26">
    <citation type="journal article" date="2018" name="Nat. Commun.">
        <title>CryoEM reveals how the complement membrane attack complex ruptures lipid bilayers.</title>
        <authorList>
            <person name="Menny A."/>
            <person name="Serna M."/>
            <person name="Boyd C.M."/>
            <person name="Gardner S."/>
            <person name="Joseph A.P."/>
            <person name="Morgan B.P."/>
            <person name="Topf M."/>
            <person name="Brooks N.J."/>
            <person name="Bubeck D."/>
        </authorList>
    </citation>
    <scope>STRUCTURE BY ELECTRON MICROSCOPY (5.60 ANGSTROMS) OF 22-559 OF MEMBRANE ATTACK COMPLEX</scope>
    <scope>FUNCTION</scope>
    <scope>SUBCELLULAR LOCATION</scope>
    <scope>SUBUNIT</scope>
    <scope>DISULFIDE BONDS</scope>
    <scope>GLYCOSYLATION AT ASN-277 AND ASN-415</scope>
</reference>
<reference evidence="37 38" key="27">
    <citation type="journal article" date="2021" name="Nat. Commun.">
        <title>Structural basis of soluble membrane attack complex packaging for clearance.</title>
        <authorList>
            <person name="Menny A."/>
            <person name="Lukassen M.V."/>
            <person name="Couves E.C."/>
            <person name="Franc V."/>
            <person name="Heck A.J.R."/>
            <person name="Bubeck D."/>
        </authorList>
    </citation>
    <scope>STRUCTURE BY ELECTRON MICROSCOPY (3.27 ANGSTROMS) OF 22-559</scope>
    <scope>ACTIVITY REGULATION</scope>
    <scope>DISULFIDE BONDS</scope>
</reference>
<reference evidence="41" key="28">
    <citation type="journal article" date="2023" name="Commun. Biol.">
        <title>The neoepitope of the complement C5b-9 membrane attack complex is formed by proximity of adjacent ancillary regions of C9.</title>
        <authorList>
            <person name="Bayly-Jones C."/>
            <person name="Ho B.H.T."/>
            <person name="Lau C."/>
            <person name="Leung E.W.W."/>
            <person name="D'Andrea L."/>
            <person name="Lupton C.J."/>
            <person name="Ekkel S.M."/>
            <person name="Venugopal H."/>
            <person name="Whisstock J.C."/>
            <person name="Mollnes T.E."/>
            <person name="Spicer B.A."/>
            <person name="Dunstone M.A."/>
        </authorList>
    </citation>
    <scope>STRUCTURE BY ELECTRON MICROSCOPY (3.20 ANGSTROMS) OF 21-559</scope>
    <scope>DISULFIDE BONDS</scope>
    <scope>ACTIVITY REGULATION</scope>
    <scope>MUTAGENESIS OF 86-ARG--PRO-93; ARG-86; VAL-89 AND PRO-93</scope>
</reference>
<reference evidence="39 40" key="29">
    <citation type="journal article" date="2023" name="Nat. Commun.">
        <title>Structural basis for membrane attack complex inhibition by CD59.</title>
        <authorList>
            <person name="Couves E.C."/>
            <person name="Gardner S."/>
            <person name="Voisin T.B."/>
            <person name="Bickel J.K."/>
            <person name="Stansfeld P.J."/>
            <person name="Tate E.W."/>
            <person name="Bubeck D."/>
        </authorList>
    </citation>
    <scope>STRUCTURE BY ELECTRON MICROSCOPY (3.00 ANGSTROMS) IN COMPLEX WITH THE MEMBRANE ATTACK COMPLEX</scope>
    <scope>ACTIVITY REGULATION</scope>
</reference>
<reference key="30">
    <citation type="journal article" date="2013" name="Nat. Genet.">
        <title>Rare variants in CFI, C3 and C9 are associated with high risk of advanced age-related macular degeneration.</title>
        <authorList>
            <person name="Seddon J.M."/>
            <person name="Yu Y."/>
            <person name="Miller E.C."/>
            <person name="Reynolds R."/>
            <person name="Tan P.L."/>
            <person name="Gowrisankar S."/>
            <person name="Goldstein J.I."/>
            <person name="Triebwasser M."/>
            <person name="Anderson H.E."/>
            <person name="Zerbib J."/>
            <person name="Kavanagh D."/>
            <person name="Souied E."/>
            <person name="Katsanis N."/>
            <person name="Daly M.J."/>
            <person name="Atkinson J.P."/>
            <person name="Raychaudhuri S."/>
        </authorList>
    </citation>
    <scope>VARIANT ARMD15 SER-167</scope>
</reference>